<proteinExistence type="inferred from homology"/>
<organism>
    <name type="scientific">Limosilactobacillus reuteri (strain DSM 20016)</name>
    <name type="common">Lactobacillus reuteri</name>
    <dbReference type="NCBI Taxonomy" id="557436"/>
    <lineage>
        <taxon>Bacteria</taxon>
        <taxon>Bacillati</taxon>
        <taxon>Bacillota</taxon>
        <taxon>Bacilli</taxon>
        <taxon>Lactobacillales</taxon>
        <taxon>Lactobacillaceae</taxon>
        <taxon>Limosilactobacillus</taxon>
    </lineage>
</organism>
<comment type="function">
    <text evidence="1">Enables the recognition and targeting of unfolded and aggregated proteins to the ClpC protease or to other proteins involved in proteolysis.</text>
</comment>
<comment type="subunit">
    <text evidence="1">Homodimer.</text>
</comment>
<comment type="domain">
    <text>The N-terminal domain probably binds unfolded/aggregated proteins; the C-terminal domain interacts with ClpC.</text>
</comment>
<comment type="similarity">
    <text evidence="1">Belongs to the MecA family.</text>
</comment>
<gene>
    <name evidence="1" type="primary">mecA</name>
    <name type="ordered locus">Lreu_0568</name>
</gene>
<feature type="chain" id="PRO_1000065340" description="Adapter protein MecA">
    <location>
        <begin position="1"/>
        <end position="223"/>
    </location>
</feature>
<protein>
    <recommendedName>
        <fullName evidence="1">Adapter protein MecA</fullName>
    </recommendedName>
</protein>
<name>MECA_LIMRD</name>
<keyword id="KW-1185">Reference proteome</keyword>
<accession>A5VJ12</accession>
<evidence type="ECO:0000255" key="1">
    <source>
        <dbReference type="HAMAP-Rule" id="MF_01124"/>
    </source>
</evidence>
<reference key="1">
    <citation type="journal article" date="2011" name="PLoS Genet.">
        <title>The evolution of host specialization in the vertebrate gut symbiont Lactobacillus reuteri.</title>
        <authorList>
            <person name="Frese S.A."/>
            <person name="Benson A.K."/>
            <person name="Tannock G.W."/>
            <person name="Loach D.M."/>
            <person name="Kim J."/>
            <person name="Zhang M."/>
            <person name="Oh P.L."/>
            <person name="Heng N.C."/>
            <person name="Patil P.B."/>
            <person name="Juge N."/>
            <person name="Mackenzie D.A."/>
            <person name="Pearson B.M."/>
            <person name="Lapidus A."/>
            <person name="Dalin E."/>
            <person name="Tice H."/>
            <person name="Goltsman E."/>
            <person name="Land M."/>
            <person name="Hauser L."/>
            <person name="Ivanova N."/>
            <person name="Kyrpides N.C."/>
            <person name="Walter J."/>
        </authorList>
    </citation>
    <scope>NUCLEOTIDE SEQUENCE [LARGE SCALE GENOMIC DNA]</scope>
    <source>
        <strain>DSM 20016</strain>
    </source>
</reference>
<sequence length="223" mass="25701">MEMERINENTIRVLVDNDDLSARGITILDLLGDHQQIEDFFYSILKEVDTDHQFQNNDAVTFQVMPTNNGLELFISKNDSNFAGNEQHGPINDQVSKYIKQHLIQKNSPDQDQRKTAINDSEDNEIQHTNWQVITFDSFEDLIDFAKIAESDDVSSYLYKYNDLYYLAIAYSDSILNSNDVKDQLALAYEYGNPTATTVDFLSEHGKKIMSVSALHLIRHYFE</sequence>
<dbReference type="EMBL" id="CP000705">
    <property type="protein sequence ID" value="ABQ82836.1"/>
    <property type="molecule type" value="Genomic_DNA"/>
</dbReference>
<dbReference type="RefSeq" id="WP_003666878.1">
    <property type="nucleotide sequence ID" value="NZ_AZDD01000049.1"/>
</dbReference>
<dbReference type="SMR" id="A5VJ12"/>
<dbReference type="STRING" id="557436.Lreu_0568"/>
<dbReference type="KEGG" id="lre:Lreu_0568"/>
<dbReference type="PATRIC" id="fig|557436.17.peg.1485"/>
<dbReference type="eggNOG" id="COG4862">
    <property type="taxonomic scope" value="Bacteria"/>
</dbReference>
<dbReference type="HOGENOM" id="CLU_071496_2_0_9"/>
<dbReference type="Proteomes" id="UP000001991">
    <property type="component" value="Chromosome"/>
</dbReference>
<dbReference type="GO" id="GO:0030674">
    <property type="term" value="F:protein-macromolecule adaptor activity"/>
    <property type="evidence" value="ECO:0007669"/>
    <property type="project" value="UniProtKB-UniRule"/>
</dbReference>
<dbReference type="Gene3D" id="3.30.70.1950">
    <property type="match status" value="1"/>
</dbReference>
<dbReference type="HAMAP" id="MF_01124">
    <property type="entry name" value="MecA"/>
    <property type="match status" value="1"/>
</dbReference>
<dbReference type="InterPro" id="IPR038471">
    <property type="entry name" value="MecA_C_sf"/>
</dbReference>
<dbReference type="InterPro" id="IPR008681">
    <property type="entry name" value="Neg-reg_MecA"/>
</dbReference>
<dbReference type="PANTHER" id="PTHR39161">
    <property type="entry name" value="ADAPTER PROTEIN MECA"/>
    <property type="match status" value="1"/>
</dbReference>
<dbReference type="PANTHER" id="PTHR39161:SF1">
    <property type="entry name" value="ADAPTER PROTEIN MECA 1"/>
    <property type="match status" value="1"/>
</dbReference>
<dbReference type="Pfam" id="PF05389">
    <property type="entry name" value="MecA"/>
    <property type="match status" value="1"/>
</dbReference>
<dbReference type="PIRSF" id="PIRSF029008">
    <property type="entry name" value="MecA"/>
    <property type="match status" value="1"/>
</dbReference>